<comment type="function">
    <text evidence="1">Catalyzes the conversion of allantoin (5-ureidohydantoin) to allantoic acid by hydrolytic cleavage of the five-member hydantoin ring.</text>
</comment>
<comment type="catalytic activity">
    <reaction evidence="1">
        <text>(S)-allantoin + H2O = allantoate + H(+)</text>
        <dbReference type="Rhea" id="RHEA:17029"/>
        <dbReference type="ChEBI" id="CHEBI:15377"/>
        <dbReference type="ChEBI" id="CHEBI:15378"/>
        <dbReference type="ChEBI" id="CHEBI:15678"/>
        <dbReference type="ChEBI" id="CHEBI:17536"/>
        <dbReference type="EC" id="3.5.2.5"/>
    </reaction>
</comment>
<comment type="cofactor">
    <cofactor evidence="1">
        <name>Zn(2+)</name>
        <dbReference type="ChEBI" id="CHEBI:29105"/>
    </cofactor>
    <text evidence="1">Binds 2 Zn(2+) ions per subunit.</text>
</comment>
<comment type="pathway">
    <text evidence="1">Nitrogen metabolism; (S)-allantoin degradation; allantoate from (S)-allantoin: step 1/1.</text>
</comment>
<comment type="subunit">
    <text evidence="1">Homotetramer.</text>
</comment>
<comment type="PTM">
    <text evidence="1">Carboxylation allows a single lysine to coordinate two zinc ions.</text>
</comment>
<comment type="similarity">
    <text evidence="1">Belongs to the metallo-dependent hydrolases superfamily. Allantoinase family.</text>
</comment>
<keyword id="KW-0378">Hydrolase</keyword>
<keyword id="KW-0479">Metal-binding</keyword>
<keyword id="KW-0659">Purine metabolism</keyword>
<keyword id="KW-1185">Reference proteome</keyword>
<keyword id="KW-0862">Zinc</keyword>
<feature type="chain" id="PRO_0000317681" description="Allantoinase">
    <location>
        <begin position="1"/>
        <end position="454"/>
    </location>
</feature>
<feature type="binding site" evidence="1">
    <location>
        <position position="60"/>
    </location>
    <ligand>
        <name>Zn(2+)</name>
        <dbReference type="ChEBI" id="CHEBI:29105"/>
        <label>1</label>
    </ligand>
</feature>
<feature type="binding site" evidence="1">
    <location>
        <position position="62"/>
    </location>
    <ligand>
        <name>Zn(2+)</name>
        <dbReference type="ChEBI" id="CHEBI:29105"/>
        <label>1</label>
    </ligand>
</feature>
<feature type="binding site" description="via carbamate group" evidence="1">
    <location>
        <position position="147"/>
    </location>
    <ligand>
        <name>Zn(2+)</name>
        <dbReference type="ChEBI" id="CHEBI:29105"/>
        <label>1</label>
    </ligand>
</feature>
<feature type="binding site" description="via carbamate group" evidence="1">
    <location>
        <position position="147"/>
    </location>
    <ligand>
        <name>Zn(2+)</name>
        <dbReference type="ChEBI" id="CHEBI:29105"/>
        <label>2</label>
    </ligand>
</feature>
<feature type="binding site" evidence="1">
    <location>
        <position position="183"/>
    </location>
    <ligand>
        <name>Zn(2+)</name>
        <dbReference type="ChEBI" id="CHEBI:29105"/>
        <label>2</label>
    </ligand>
</feature>
<feature type="binding site" evidence="1">
    <location>
        <position position="239"/>
    </location>
    <ligand>
        <name>Zn(2+)</name>
        <dbReference type="ChEBI" id="CHEBI:29105"/>
        <label>2</label>
    </ligand>
</feature>
<feature type="binding site" evidence="1">
    <location>
        <position position="312"/>
    </location>
    <ligand>
        <name>Zn(2+)</name>
        <dbReference type="ChEBI" id="CHEBI:29105"/>
        <label>1</label>
    </ligand>
</feature>
<feature type="modified residue" description="N6-carboxylysine" evidence="1">
    <location>
        <position position="147"/>
    </location>
</feature>
<organism>
    <name type="scientific">Rubrobacter xylanophilus (strain DSM 9941 / JCM 11954 / NBRC 16129 / PRD-1)</name>
    <dbReference type="NCBI Taxonomy" id="266117"/>
    <lineage>
        <taxon>Bacteria</taxon>
        <taxon>Bacillati</taxon>
        <taxon>Actinomycetota</taxon>
        <taxon>Rubrobacteria</taxon>
        <taxon>Rubrobacterales</taxon>
        <taxon>Rubrobacteraceae</taxon>
        <taxon>Rubrobacter</taxon>
    </lineage>
</organism>
<sequence>MSAFDLIVRGGTVVRGGCEVADVGVADGVISAVGPDLEGGAREEIDARGLLVLPGAIDAHVHFNEPGRTRWEGFASGTRALAAGGTTLCVEMPLNAHPPTTDGESFDLKLAAAKASAHVDFALWGGIVPGRVGRMEELAGRGVAGFKAFMSATGTPDFEAADDLTLYEGMQEAARLGLPVLVHAENRQITDALARRATSALRTTMRDYLASRPAVAELEAIGRAILLASEAGCSLHIVHVSTGRGVALVAAARERGVDVTCETCPHYLLFTDEDAVRIGAAAKCAPPLRPREEVESLWEQVLAGNVAFVTSDHSPCPPDMKAGEDMFRAWGGISGCQSLLPALLDEGYHGRGLPPERLAELLSANVARRFGFAGKGGIEEGNDADLALVDPSGEHVLREEDLHYRHPISPYVGRSFRGRVVRTILRGRTVFEGGRVVSGPAGRFVRPQREKGER</sequence>
<reference key="1">
    <citation type="submission" date="2006-06" db="EMBL/GenBank/DDBJ databases">
        <title>Complete sequence of Rubrobacter xylanophilus DSM 9941.</title>
        <authorList>
            <consortium name="US DOE Joint Genome Institute"/>
            <person name="Copeland A."/>
            <person name="Lucas S."/>
            <person name="Lapidus A."/>
            <person name="Barry K."/>
            <person name="Detter J.C."/>
            <person name="Glavina del Rio T."/>
            <person name="Hammon N."/>
            <person name="Israni S."/>
            <person name="Dalin E."/>
            <person name="Tice H."/>
            <person name="Pitluck S."/>
            <person name="Munk A.C."/>
            <person name="Brettin T."/>
            <person name="Bruce D."/>
            <person name="Han C."/>
            <person name="Tapia R."/>
            <person name="Gilna P."/>
            <person name="Schmutz J."/>
            <person name="Larimer F."/>
            <person name="Land M."/>
            <person name="Hauser L."/>
            <person name="Kyrpides N."/>
            <person name="Lykidis A."/>
            <person name="da Costa M.S."/>
            <person name="Rainey F.A."/>
            <person name="Empadinhas N."/>
            <person name="Jolivet E."/>
            <person name="Battista J.R."/>
            <person name="Richardson P."/>
        </authorList>
    </citation>
    <scope>NUCLEOTIDE SEQUENCE [LARGE SCALE GENOMIC DNA]</scope>
    <source>
        <strain>DSM 9941 / JCM 11954 / NBRC 16129 / PRD-1</strain>
    </source>
</reference>
<evidence type="ECO:0000255" key="1">
    <source>
        <dbReference type="HAMAP-Rule" id="MF_01645"/>
    </source>
</evidence>
<proteinExistence type="inferred from homology"/>
<protein>
    <recommendedName>
        <fullName evidence="1">Allantoinase</fullName>
        <ecNumber evidence="1">3.5.2.5</ecNumber>
    </recommendedName>
    <alternativeName>
        <fullName evidence="1">Allantoin-utilizing enzyme</fullName>
    </alternativeName>
</protein>
<dbReference type="EC" id="3.5.2.5" evidence="1"/>
<dbReference type="EMBL" id="CP000386">
    <property type="protein sequence ID" value="ABG05757.1"/>
    <property type="molecule type" value="Genomic_DNA"/>
</dbReference>
<dbReference type="RefSeq" id="WP_011565766.1">
    <property type="nucleotide sequence ID" value="NC_008148.1"/>
</dbReference>
<dbReference type="SMR" id="Q1AS71"/>
<dbReference type="STRING" id="266117.Rxyl_2845"/>
<dbReference type="KEGG" id="rxy:Rxyl_2845"/>
<dbReference type="eggNOG" id="COG0044">
    <property type="taxonomic scope" value="Bacteria"/>
</dbReference>
<dbReference type="HOGENOM" id="CLU_015572_4_2_11"/>
<dbReference type="OrthoDB" id="9803027at2"/>
<dbReference type="PhylomeDB" id="Q1AS71"/>
<dbReference type="UniPathway" id="UPA00395">
    <property type="reaction ID" value="UER00653"/>
</dbReference>
<dbReference type="Proteomes" id="UP000006637">
    <property type="component" value="Chromosome"/>
</dbReference>
<dbReference type="GO" id="GO:0005737">
    <property type="term" value="C:cytoplasm"/>
    <property type="evidence" value="ECO:0007669"/>
    <property type="project" value="TreeGrafter"/>
</dbReference>
<dbReference type="GO" id="GO:0004038">
    <property type="term" value="F:allantoinase activity"/>
    <property type="evidence" value="ECO:0007669"/>
    <property type="project" value="UniProtKB-UniRule"/>
</dbReference>
<dbReference type="GO" id="GO:0050897">
    <property type="term" value="F:cobalt ion binding"/>
    <property type="evidence" value="ECO:0007669"/>
    <property type="project" value="InterPro"/>
</dbReference>
<dbReference type="GO" id="GO:0008270">
    <property type="term" value="F:zinc ion binding"/>
    <property type="evidence" value="ECO:0007669"/>
    <property type="project" value="InterPro"/>
</dbReference>
<dbReference type="GO" id="GO:0000256">
    <property type="term" value="P:allantoin catabolic process"/>
    <property type="evidence" value="ECO:0007669"/>
    <property type="project" value="UniProtKB-UniRule"/>
</dbReference>
<dbReference type="GO" id="GO:0006145">
    <property type="term" value="P:purine nucleobase catabolic process"/>
    <property type="evidence" value="ECO:0007669"/>
    <property type="project" value="TreeGrafter"/>
</dbReference>
<dbReference type="FunFam" id="3.20.20.140:FF:000174">
    <property type="entry name" value="Dihydropyrimidinase-related protein 2"/>
    <property type="match status" value="1"/>
</dbReference>
<dbReference type="Gene3D" id="3.20.20.140">
    <property type="entry name" value="Metal-dependent hydrolases"/>
    <property type="match status" value="1"/>
</dbReference>
<dbReference type="Gene3D" id="2.30.40.10">
    <property type="entry name" value="Urease, subunit C, domain 1"/>
    <property type="match status" value="1"/>
</dbReference>
<dbReference type="HAMAP" id="MF_01645">
    <property type="entry name" value="Hydantoinase"/>
    <property type="match status" value="1"/>
</dbReference>
<dbReference type="InterPro" id="IPR017593">
    <property type="entry name" value="Allantoinase"/>
</dbReference>
<dbReference type="InterPro" id="IPR047604">
    <property type="entry name" value="Allantoinase_bact"/>
</dbReference>
<dbReference type="InterPro" id="IPR006680">
    <property type="entry name" value="Amidohydro-rel"/>
</dbReference>
<dbReference type="InterPro" id="IPR050138">
    <property type="entry name" value="DHOase/Allantoinase_Hydrolase"/>
</dbReference>
<dbReference type="InterPro" id="IPR002195">
    <property type="entry name" value="Dihydroorotase_CS"/>
</dbReference>
<dbReference type="InterPro" id="IPR011059">
    <property type="entry name" value="Metal-dep_hydrolase_composite"/>
</dbReference>
<dbReference type="InterPro" id="IPR032466">
    <property type="entry name" value="Metal_Hydrolase"/>
</dbReference>
<dbReference type="NCBIfam" id="TIGR03178">
    <property type="entry name" value="allantoinase"/>
    <property type="match status" value="1"/>
</dbReference>
<dbReference type="NCBIfam" id="TIGR00857">
    <property type="entry name" value="pyrC_multi"/>
    <property type="match status" value="1"/>
</dbReference>
<dbReference type="PANTHER" id="PTHR43668">
    <property type="entry name" value="ALLANTOINASE"/>
    <property type="match status" value="1"/>
</dbReference>
<dbReference type="PANTHER" id="PTHR43668:SF4">
    <property type="entry name" value="ALLANTOINASE"/>
    <property type="match status" value="1"/>
</dbReference>
<dbReference type="Pfam" id="PF01979">
    <property type="entry name" value="Amidohydro_1"/>
    <property type="match status" value="1"/>
</dbReference>
<dbReference type="SUPFAM" id="SSF51338">
    <property type="entry name" value="Composite domain of metallo-dependent hydrolases"/>
    <property type="match status" value="1"/>
</dbReference>
<dbReference type="SUPFAM" id="SSF51556">
    <property type="entry name" value="Metallo-dependent hydrolases"/>
    <property type="match status" value="1"/>
</dbReference>
<gene>
    <name evidence="1" type="primary">allB</name>
    <name type="ordered locus">Rxyl_2845</name>
</gene>
<name>ALLB_RUBXD</name>
<accession>Q1AS71</accession>